<feature type="chain" id="PRO_0000223290" description="Serum paraoxonase/lactonase 3">
    <location>
        <begin position="1"/>
        <end position="354"/>
    </location>
</feature>
<feature type="signal peptide" description="Not cleaved" evidence="2">
    <location>
        <begin position="1"/>
        <end status="unknown"/>
    </location>
</feature>
<feature type="active site" description="Proton acceptor" evidence="1">
    <location>
        <position position="114"/>
    </location>
</feature>
<feature type="binding site" evidence="1">
    <location>
        <position position="53"/>
    </location>
    <ligand>
        <name>Ca(2+)</name>
        <dbReference type="ChEBI" id="CHEBI:29108"/>
        <label>1</label>
        <note>catalytic</note>
    </ligand>
</feature>
<feature type="binding site" evidence="1">
    <location>
        <position position="54"/>
    </location>
    <ligand>
        <name>Ca(2+)</name>
        <dbReference type="ChEBI" id="CHEBI:29108"/>
        <label>2</label>
    </ligand>
</feature>
<feature type="binding site" evidence="1">
    <location>
        <position position="116"/>
    </location>
    <ligand>
        <name>Ca(2+)</name>
        <dbReference type="ChEBI" id="CHEBI:29108"/>
        <label>2</label>
    </ligand>
</feature>
<feature type="binding site" evidence="1">
    <location>
        <position position="167"/>
    </location>
    <ligand>
        <name>Ca(2+)</name>
        <dbReference type="ChEBI" id="CHEBI:29108"/>
        <label>1</label>
        <note>catalytic</note>
    </ligand>
</feature>
<feature type="binding site" evidence="1">
    <location>
        <position position="168"/>
    </location>
    <ligand>
        <name>Ca(2+)</name>
        <dbReference type="ChEBI" id="CHEBI:29108"/>
        <label>2</label>
    </ligand>
</feature>
<feature type="binding site" evidence="1">
    <location>
        <position position="223"/>
    </location>
    <ligand>
        <name>Ca(2+)</name>
        <dbReference type="ChEBI" id="CHEBI:29108"/>
        <label>1</label>
        <note>catalytic</note>
    </ligand>
</feature>
<feature type="binding site" evidence="1">
    <location>
        <position position="268"/>
    </location>
    <ligand>
        <name>Ca(2+)</name>
        <dbReference type="ChEBI" id="CHEBI:29108"/>
        <label>1</label>
        <note>catalytic</note>
    </ligand>
</feature>
<feature type="binding site" evidence="1">
    <location>
        <position position="269"/>
    </location>
    <ligand>
        <name>Ca(2+)</name>
        <dbReference type="ChEBI" id="CHEBI:29108"/>
        <label>1</label>
        <note>catalytic</note>
    </ligand>
</feature>
<feature type="modified residue" description="Phosphoserine" evidence="7">
    <location>
        <position position="165"/>
    </location>
</feature>
<feature type="glycosylation site" description="N-linked (GlcNAc...) asparagine" evidence="2">
    <location>
        <position position="29"/>
    </location>
</feature>
<feature type="glycosylation site" description="N-linked (GlcNAc...) asparagine" evidence="2">
    <location>
        <position position="269"/>
    </location>
</feature>
<feature type="glycosylation site" description="N-linked (GlcNAc...) asparagine" evidence="4">
    <location>
        <position position="323"/>
    </location>
</feature>
<feature type="disulfide bond" evidence="1">
    <location>
        <begin position="42"/>
        <end position="352"/>
    </location>
</feature>
<feature type="sequence variant" id="VAR_021082" description="In dbSNP:rs17878827." evidence="5">
    <original>E</original>
    <variation>K</variation>
    <location>
        <position position="146"/>
    </location>
</feature>
<feature type="sequence variant" id="VAR_021083" description="In dbSNP:rs17883013." evidence="5">
    <original>A</original>
    <variation>D</variation>
    <location>
        <position position="179"/>
    </location>
</feature>
<feature type="sequence conflict" description="In Ref. 8; AAC41996." evidence="6" ref="8">
    <original>G</original>
    <variation>E</variation>
    <location>
        <position position="18"/>
    </location>
</feature>
<feature type="sequence conflict" description="In Ref. 8; AAC41996." evidence="6" ref="8">
    <original>R</original>
    <variation>Q</variation>
    <location>
        <position position="32"/>
    </location>
</feature>
<feature type="sequence conflict" description="In Ref. 7; AAH70374." evidence="6" ref="7">
    <original>S</original>
    <variation>N</variation>
    <location>
        <position position="50"/>
    </location>
</feature>
<feature type="sequence conflict" description="In Ref. 1; AAK07629." evidence="6" ref="1">
    <original>LP</original>
    <variation>FL</variation>
    <location>
        <begin position="58"/>
        <end position="59"/>
    </location>
</feature>
<feature type="sequence conflict" description="In Ref. 8; AAC41996." evidence="6" ref="8">
    <original>A</original>
    <variation>S</variation>
    <location>
        <position position="63"/>
    </location>
</feature>
<feature type="sequence conflict" description="In Ref. 8; AAC41996." evidence="6" ref="8">
    <original>G</original>
    <variation>E</variation>
    <location>
        <position position="68"/>
    </location>
</feature>
<organism>
    <name type="scientific">Homo sapiens</name>
    <name type="common">Human</name>
    <dbReference type="NCBI Taxonomy" id="9606"/>
    <lineage>
        <taxon>Eukaryota</taxon>
        <taxon>Metazoa</taxon>
        <taxon>Chordata</taxon>
        <taxon>Craniata</taxon>
        <taxon>Vertebrata</taxon>
        <taxon>Euteleostomi</taxon>
        <taxon>Mammalia</taxon>
        <taxon>Eutheria</taxon>
        <taxon>Euarchontoglires</taxon>
        <taxon>Primates</taxon>
        <taxon>Haplorrhini</taxon>
        <taxon>Catarrhini</taxon>
        <taxon>Hominidae</taxon>
        <taxon>Homo</taxon>
    </lineage>
</organism>
<proteinExistence type="evidence at protein level"/>
<comment type="function">
    <text evidence="3">Has low activity towards the organophosphate paraxon and aromatic carboxylic acid esters. Rapidly hydrolyzes lactones such as statin prodrugs (e.g. lovastatin). Hydrolyzes aromatic lactones and 5- or 6-member ring lactones with aliphatic substituents but not simple lactones or those with polar substituents.</text>
</comment>
<comment type="catalytic activity">
    <reaction evidence="3">
        <text>a phenyl acetate + H2O = a phenol + acetate + H(+)</text>
        <dbReference type="Rhea" id="RHEA:17309"/>
        <dbReference type="ChEBI" id="CHEBI:15377"/>
        <dbReference type="ChEBI" id="CHEBI:15378"/>
        <dbReference type="ChEBI" id="CHEBI:30089"/>
        <dbReference type="ChEBI" id="CHEBI:33853"/>
        <dbReference type="ChEBI" id="CHEBI:140310"/>
        <dbReference type="EC" id="3.1.1.2"/>
    </reaction>
</comment>
<comment type="catalytic activity">
    <reaction evidence="3">
        <text>An aryl dialkyl phosphate + H2O = dialkyl phosphate + an aryl alcohol.</text>
        <dbReference type="EC" id="3.1.8.1"/>
    </reaction>
</comment>
<comment type="catalytic activity">
    <reaction evidence="3">
        <text>an N-acyl-L-homoserine lactone + H2O = an N-acyl-L-homoserine + H(+)</text>
        <dbReference type="Rhea" id="RHEA:22576"/>
        <dbReference type="ChEBI" id="CHEBI:15377"/>
        <dbReference type="ChEBI" id="CHEBI:15378"/>
        <dbReference type="ChEBI" id="CHEBI:55474"/>
        <dbReference type="ChEBI" id="CHEBI:58921"/>
        <dbReference type="EC" id="3.1.1.81"/>
    </reaction>
</comment>
<comment type="cofactor">
    <cofactor evidence="1">
        <name>Ca(2+)</name>
        <dbReference type="ChEBI" id="CHEBI:29108"/>
    </cofactor>
    <text evidence="1">Binds 2 calcium ions per subunit.</text>
</comment>
<comment type="subunit">
    <text evidence="3">Homodimer.</text>
</comment>
<comment type="subcellular location">
    <subcellularLocation>
        <location evidence="1">Secreted</location>
        <location evidence="1">Extracellular space</location>
    </subcellularLocation>
</comment>
<comment type="PTM">
    <text evidence="1">The signal sequence is not cleaved.</text>
</comment>
<comment type="similarity">
    <text evidence="6">Belongs to the paraoxonase family.</text>
</comment>
<evidence type="ECO:0000250" key="1"/>
<evidence type="ECO:0000255" key="2"/>
<evidence type="ECO:0000269" key="3">
    <source>
    </source>
</evidence>
<evidence type="ECO:0000269" key="4">
    <source>
    </source>
</evidence>
<evidence type="ECO:0000269" key="5">
    <source ref="3"/>
</evidence>
<evidence type="ECO:0000305" key="6"/>
<evidence type="ECO:0007744" key="7">
    <source>
    </source>
</evidence>
<protein>
    <recommendedName>
        <fullName>Serum paraoxonase/lactonase 3</fullName>
        <ecNumber>3.1.1.2</ecNumber>
        <ecNumber>3.1.1.81</ecNumber>
        <ecNumber>3.1.8.1</ecNumber>
    </recommendedName>
</protein>
<dbReference type="EC" id="3.1.1.2"/>
<dbReference type="EC" id="3.1.1.81"/>
<dbReference type="EC" id="3.1.8.1"/>
<dbReference type="EMBL" id="AF320003">
    <property type="protein sequence ID" value="AAK07629.1"/>
    <property type="molecule type" value="mRNA"/>
</dbReference>
<dbReference type="EMBL" id="AF329433">
    <property type="protein sequence ID" value="AAO15365.1"/>
    <property type="molecule type" value="mRNA"/>
</dbReference>
<dbReference type="EMBL" id="AY805220">
    <property type="protein sequence ID" value="AAV50000.1"/>
    <property type="molecule type" value="Genomic_DNA"/>
</dbReference>
<dbReference type="EMBL" id="AC004022">
    <property type="status" value="NOT_ANNOTATED_CDS"/>
    <property type="molecule type" value="Genomic_DNA"/>
</dbReference>
<dbReference type="EMBL" id="AC005021">
    <property type="status" value="NOT_ANNOTATED_CDS"/>
    <property type="molecule type" value="Genomic_DNA"/>
</dbReference>
<dbReference type="EMBL" id="CH236949">
    <property type="protein sequence ID" value="EAL24132.1"/>
    <property type="molecule type" value="Genomic_DNA"/>
</dbReference>
<dbReference type="EMBL" id="CH471091">
    <property type="protein sequence ID" value="EAW76768.1"/>
    <property type="molecule type" value="Genomic_DNA"/>
</dbReference>
<dbReference type="EMBL" id="BC070374">
    <property type="protein sequence ID" value="AAH70374.1"/>
    <property type="molecule type" value="mRNA"/>
</dbReference>
<dbReference type="EMBL" id="L48516">
    <property type="protein sequence ID" value="AAC41996.1"/>
    <property type="molecule type" value="mRNA"/>
</dbReference>
<dbReference type="CCDS" id="CCDS5639.1"/>
<dbReference type="RefSeq" id="NP_000931.1">
    <property type="nucleotide sequence ID" value="NM_000940.3"/>
</dbReference>
<dbReference type="SMR" id="Q15166"/>
<dbReference type="BioGRID" id="111442">
    <property type="interactions" value="6"/>
</dbReference>
<dbReference type="FunCoup" id="Q15166">
    <property type="interactions" value="26"/>
</dbReference>
<dbReference type="IntAct" id="Q15166">
    <property type="interactions" value="5"/>
</dbReference>
<dbReference type="STRING" id="9606.ENSP00000265627"/>
<dbReference type="BindingDB" id="Q15166"/>
<dbReference type="ChEMBL" id="CHEMBL4295824"/>
<dbReference type="DrugBank" id="DB14598">
    <property type="generic name" value="Edetate calcium disodium anhydrous"/>
</dbReference>
<dbReference type="DrugBank" id="DB14600">
    <property type="generic name" value="Edetate disodium anhydrous"/>
</dbReference>
<dbReference type="DrugBank" id="DB00974">
    <property type="generic name" value="Edetic acid"/>
</dbReference>
<dbReference type="DrugBank" id="DB00227">
    <property type="generic name" value="Lovastatin"/>
</dbReference>
<dbReference type="GlyCosmos" id="Q15166">
    <property type="glycosylation" value="3 sites, No reported glycans"/>
</dbReference>
<dbReference type="GlyGen" id="Q15166">
    <property type="glycosylation" value="3 sites, 3 N-linked glycans (1 site)"/>
</dbReference>
<dbReference type="iPTMnet" id="Q15166"/>
<dbReference type="PhosphoSitePlus" id="Q15166"/>
<dbReference type="BioMuta" id="PON3"/>
<dbReference type="DMDM" id="50403778"/>
<dbReference type="CPTAC" id="non-CPTAC-2696"/>
<dbReference type="CPTAC" id="non-CPTAC-2697"/>
<dbReference type="jPOST" id="Q15166"/>
<dbReference type="MassIVE" id="Q15166"/>
<dbReference type="PaxDb" id="9606-ENSP00000265627"/>
<dbReference type="PeptideAtlas" id="Q15166"/>
<dbReference type="ProteomicsDB" id="60478"/>
<dbReference type="Antibodypedia" id="15863">
    <property type="antibodies" value="304 antibodies from 30 providers"/>
</dbReference>
<dbReference type="DNASU" id="5446"/>
<dbReference type="Ensembl" id="ENST00000265627.10">
    <property type="protein sequence ID" value="ENSP00000265627.5"/>
    <property type="gene ID" value="ENSG00000105852.11"/>
</dbReference>
<dbReference type="GeneID" id="5446"/>
<dbReference type="KEGG" id="hsa:5446"/>
<dbReference type="MANE-Select" id="ENST00000265627.10">
    <property type="protein sequence ID" value="ENSP00000265627.5"/>
    <property type="RefSeq nucleotide sequence ID" value="NM_000940.3"/>
    <property type="RefSeq protein sequence ID" value="NP_000931.1"/>
</dbReference>
<dbReference type="UCSC" id="uc003unt.4">
    <property type="organism name" value="human"/>
</dbReference>
<dbReference type="AGR" id="HGNC:9206"/>
<dbReference type="CTD" id="5446"/>
<dbReference type="DisGeNET" id="5446"/>
<dbReference type="GeneCards" id="PON3"/>
<dbReference type="HGNC" id="HGNC:9206">
    <property type="gene designation" value="PON3"/>
</dbReference>
<dbReference type="HPA" id="ENSG00000105852">
    <property type="expression patterns" value="Tissue enriched (liver)"/>
</dbReference>
<dbReference type="MalaCards" id="PON3"/>
<dbReference type="MIM" id="602720">
    <property type="type" value="gene"/>
</dbReference>
<dbReference type="neXtProt" id="NX_Q15166"/>
<dbReference type="OpenTargets" id="ENSG00000105852"/>
<dbReference type="Orphanet" id="803">
    <property type="disease" value="Amyotrophic lateral sclerosis"/>
</dbReference>
<dbReference type="PharmGKB" id="PA33531"/>
<dbReference type="VEuPathDB" id="HostDB:ENSG00000105852"/>
<dbReference type="eggNOG" id="ENOG502S6UP">
    <property type="taxonomic scope" value="Eukaryota"/>
</dbReference>
<dbReference type="GeneTree" id="ENSGT00390000008932"/>
<dbReference type="HOGENOM" id="CLU_049839_0_1_1"/>
<dbReference type="InParanoid" id="Q15166"/>
<dbReference type="OMA" id="MKIHDNW"/>
<dbReference type="OrthoDB" id="423498at2759"/>
<dbReference type="PAN-GO" id="Q15166">
    <property type="GO annotations" value="3 GO annotations based on evolutionary models"/>
</dbReference>
<dbReference type="PhylomeDB" id="Q15166"/>
<dbReference type="TreeFam" id="TF322436"/>
<dbReference type="BRENDA" id="3.1.1.2">
    <property type="organism ID" value="2681"/>
</dbReference>
<dbReference type="BRENDA" id="3.1.1.25">
    <property type="organism ID" value="2681"/>
</dbReference>
<dbReference type="BRENDA" id="3.1.8.1">
    <property type="organism ID" value="2681"/>
</dbReference>
<dbReference type="PathwayCommons" id="Q15166"/>
<dbReference type="Reactome" id="R-HSA-2142688">
    <property type="pathway name" value="Synthesis of 5-eicosatetraenoic acids"/>
</dbReference>
<dbReference type="Reactome" id="R-HSA-9754706">
    <property type="pathway name" value="Atorvastatin ADME"/>
</dbReference>
<dbReference type="SignaLink" id="Q15166"/>
<dbReference type="BioGRID-ORCS" id="5446">
    <property type="hits" value="9 hits in 1148 CRISPR screens"/>
</dbReference>
<dbReference type="GeneWiki" id="PON3"/>
<dbReference type="GenomeRNAi" id="5446"/>
<dbReference type="Pharos" id="Q15166">
    <property type="development level" value="Tbio"/>
</dbReference>
<dbReference type="PRO" id="PR:Q15166"/>
<dbReference type="Proteomes" id="UP000005640">
    <property type="component" value="Chromosome 7"/>
</dbReference>
<dbReference type="RNAct" id="Q15166">
    <property type="molecule type" value="protein"/>
</dbReference>
<dbReference type="Bgee" id="ENSG00000105852">
    <property type="expression patterns" value="Expressed in right lobe of liver and 126 other cell types or tissues"/>
</dbReference>
<dbReference type="ExpressionAtlas" id="Q15166">
    <property type="expression patterns" value="baseline and differential"/>
</dbReference>
<dbReference type="GO" id="GO:0005789">
    <property type="term" value="C:endoplasmic reticulum membrane"/>
    <property type="evidence" value="ECO:0000304"/>
    <property type="project" value="Reactome"/>
</dbReference>
<dbReference type="GO" id="GO:0070062">
    <property type="term" value="C:extracellular exosome"/>
    <property type="evidence" value="ECO:0007005"/>
    <property type="project" value="UniProtKB"/>
</dbReference>
<dbReference type="GO" id="GO:0005576">
    <property type="term" value="C:extracellular region"/>
    <property type="evidence" value="ECO:0000304"/>
    <property type="project" value="Reactome"/>
</dbReference>
<dbReference type="GO" id="GO:0005615">
    <property type="term" value="C:extracellular space"/>
    <property type="evidence" value="ECO:0000318"/>
    <property type="project" value="GO_Central"/>
</dbReference>
<dbReference type="GO" id="GO:0102007">
    <property type="term" value="F:acyl-L-homoserine-lactone lactonohydrolase activity"/>
    <property type="evidence" value="ECO:0000314"/>
    <property type="project" value="ARUK-UCL"/>
</dbReference>
<dbReference type="GO" id="GO:0004063">
    <property type="term" value="F:aryldialkylphosphatase activity"/>
    <property type="evidence" value="ECO:0007669"/>
    <property type="project" value="UniProtKB-EC"/>
</dbReference>
<dbReference type="GO" id="GO:0004064">
    <property type="term" value="F:arylesterase activity"/>
    <property type="evidence" value="ECO:0000314"/>
    <property type="project" value="BHF-UCL"/>
</dbReference>
<dbReference type="GO" id="GO:0046872">
    <property type="term" value="F:metal ion binding"/>
    <property type="evidence" value="ECO:0007669"/>
    <property type="project" value="UniProtKB-KW"/>
</dbReference>
<dbReference type="GO" id="GO:0042803">
    <property type="term" value="F:protein homodimerization activity"/>
    <property type="evidence" value="ECO:0000353"/>
    <property type="project" value="BHF-UCL"/>
</dbReference>
<dbReference type="GO" id="GO:0046395">
    <property type="term" value="P:carboxylic acid catabolic process"/>
    <property type="evidence" value="ECO:0000314"/>
    <property type="project" value="BHF-UCL"/>
</dbReference>
<dbReference type="GO" id="GO:0051649">
    <property type="term" value="P:establishment of localization in cell"/>
    <property type="evidence" value="ECO:0007669"/>
    <property type="project" value="Ensembl"/>
</dbReference>
<dbReference type="GO" id="GO:1901335">
    <property type="term" value="P:lactone catabolic process"/>
    <property type="evidence" value="ECO:0000314"/>
    <property type="project" value="BHF-UCL"/>
</dbReference>
<dbReference type="GO" id="GO:0032929">
    <property type="term" value="P:negative regulation of superoxide anion generation"/>
    <property type="evidence" value="ECO:0007669"/>
    <property type="project" value="Ensembl"/>
</dbReference>
<dbReference type="GO" id="GO:2001038">
    <property type="term" value="P:regulation of cellular response to drug"/>
    <property type="evidence" value="ECO:0000314"/>
    <property type="project" value="ARUK-UCL"/>
</dbReference>
<dbReference type="GO" id="GO:0003096">
    <property type="term" value="P:renal sodium ion transport"/>
    <property type="evidence" value="ECO:0007669"/>
    <property type="project" value="Ensembl"/>
</dbReference>
<dbReference type="GO" id="GO:0009636">
    <property type="term" value="P:response to toxic substance"/>
    <property type="evidence" value="ECO:0000318"/>
    <property type="project" value="GO_Central"/>
</dbReference>
<dbReference type="FunFam" id="2.120.10.30:FF:000023">
    <property type="entry name" value="Serum paraoxonase/arylesterase 2"/>
    <property type="match status" value="1"/>
</dbReference>
<dbReference type="Gene3D" id="2.120.10.30">
    <property type="entry name" value="TolB, C-terminal domain"/>
    <property type="match status" value="1"/>
</dbReference>
<dbReference type="InterPro" id="IPR011042">
    <property type="entry name" value="6-blade_b-propeller_TolB-like"/>
</dbReference>
<dbReference type="InterPro" id="IPR002640">
    <property type="entry name" value="Arylesterase"/>
</dbReference>
<dbReference type="InterPro" id="IPR008364">
    <property type="entry name" value="Paraoxonase2"/>
</dbReference>
<dbReference type="InterPro" id="IPR051288">
    <property type="entry name" value="Serum_paraoxonase/arylesterase"/>
</dbReference>
<dbReference type="PANTHER" id="PTHR11799">
    <property type="entry name" value="PARAOXONASE"/>
    <property type="match status" value="1"/>
</dbReference>
<dbReference type="PANTHER" id="PTHR11799:SF14">
    <property type="entry name" value="SERUM PARAOXONASE_LACTONASE 3"/>
    <property type="match status" value="1"/>
</dbReference>
<dbReference type="Pfam" id="PF01731">
    <property type="entry name" value="Arylesterase"/>
    <property type="match status" value="1"/>
</dbReference>
<dbReference type="PRINTS" id="PR01785">
    <property type="entry name" value="PARAOXONASE"/>
</dbReference>
<dbReference type="PRINTS" id="PR01787">
    <property type="entry name" value="PARAOXONASE2"/>
</dbReference>
<dbReference type="SUPFAM" id="SSF63829">
    <property type="entry name" value="Calcium-dependent phosphotriesterase"/>
    <property type="match status" value="1"/>
</dbReference>
<accession>Q15166</accession>
<accession>A4D1H8</accession>
<accession>O75855</accession>
<accession>O76060</accession>
<accession>Q6IRU9</accession>
<accession>Q8IX97</accession>
<accession>Q9BZH9</accession>
<keyword id="KW-0106">Calcium</keyword>
<keyword id="KW-1015">Disulfide bond</keyword>
<keyword id="KW-0325">Glycoprotein</keyword>
<keyword id="KW-0378">Hydrolase</keyword>
<keyword id="KW-0479">Metal-binding</keyword>
<keyword id="KW-0597">Phosphoprotein</keyword>
<keyword id="KW-1267">Proteomics identification</keyword>
<keyword id="KW-1185">Reference proteome</keyword>
<keyword id="KW-0964">Secreted</keyword>
<keyword id="KW-0732">Signal</keyword>
<sequence length="354" mass="39607">MGKLVALVLLGVGLSLVGEMFLAFRERVNASREVEPVEPENCHLIEELESGSEDIDILPSGLAFISSGLKYPGMPNFAPDEPGKIFLMDLNEQNPRAQALEISGGFDKELFNPHGISIFIDKDNTVYLYVVNHPHMKSTVEIFKFEEQQRSLVYLKTIKHELLKSVNDIVVLGPEQFYATRDHYFTNSLLSFFEMILDLRWTYVLFYSPREVKVVAKGFCSANGITVSADQKYVYVADVAAKNIHIMEKHDNWDLTQLKVIQLGTLVDNLTVDPATGDILAGCHPNPMKLLNYNPEDPPGSEVLRIQNVLSEKPRVSTVYANNGSVLQGTSVASVYHGKILIGTVFHKTLYCEL</sequence>
<name>PON3_HUMAN</name>
<reference key="1">
    <citation type="submission" date="2000-11" db="EMBL/GenBank/DDBJ databases">
        <title>Human paraoxanase-3 is an HDL-associated enzyme.</title>
        <authorList>
            <person name="Reddy S.T."/>
            <person name="Wadleigh D.J."/>
            <person name="Grijalva V."/>
            <person name="Ng C."/>
            <person name="Hama S."/>
            <person name="Gangopadhyay A."/>
            <person name="Khorsan R."/>
            <person name="Shih D."/>
            <person name="Lusis A.J."/>
            <person name="Navab M."/>
            <person name="Fogelman A.M."/>
        </authorList>
    </citation>
    <scope>NUCLEOTIDE SEQUENCE [MRNA]</scope>
    <source>
        <tissue>Hepatoma</tissue>
    </source>
</reference>
<reference key="2">
    <citation type="submission" date="2000-12" db="EMBL/GenBank/DDBJ databases">
        <title>Human PON3 has lactonase activity.</title>
        <authorList>
            <person name="Draganov D.I."/>
            <person name="Watson C.E."/>
        </authorList>
    </citation>
    <scope>NUCLEOTIDE SEQUENCE [MRNA]</scope>
    <source>
        <tissue>Liver</tissue>
    </source>
</reference>
<reference key="3">
    <citation type="submission" date="2004-11" db="EMBL/GenBank/DDBJ databases">
        <authorList>
            <consortium name="SeattleSNPs variation discovery resource"/>
        </authorList>
    </citation>
    <scope>NUCLEOTIDE SEQUENCE [GENOMIC DNA]</scope>
    <scope>VARIANTS LYS-146 AND ASP-179</scope>
</reference>
<reference key="4">
    <citation type="journal article" date="2003" name="Science">
        <title>Human chromosome 7: DNA sequence and biology.</title>
        <authorList>
            <person name="Scherer S.W."/>
            <person name="Cheung J."/>
            <person name="MacDonald J.R."/>
            <person name="Osborne L.R."/>
            <person name="Nakabayashi K."/>
            <person name="Herbrick J.-A."/>
            <person name="Carson A.R."/>
            <person name="Parker-Katiraee L."/>
            <person name="Skaug J."/>
            <person name="Khaja R."/>
            <person name="Zhang J."/>
            <person name="Hudek A.K."/>
            <person name="Li M."/>
            <person name="Haddad M."/>
            <person name="Duggan G.E."/>
            <person name="Fernandez B.A."/>
            <person name="Kanematsu E."/>
            <person name="Gentles S."/>
            <person name="Christopoulos C.C."/>
            <person name="Choufani S."/>
            <person name="Kwasnicka D."/>
            <person name="Zheng X.H."/>
            <person name="Lai Z."/>
            <person name="Nusskern D.R."/>
            <person name="Zhang Q."/>
            <person name="Gu Z."/>
            <person name="Lu F."/>
            <person name="Zeesman S."/>
            <person name="Nowaczyk M.J."/>
            <person name="Teshima I."/>
            <person name="Chitayat D."/>
            <person name="Shuman C."/>
            <person name="Weksberg R."/>
            <person name="Zackai E.H."/>
            <person name="Grebe T.A."/>
            <person name="Cox S.R."/>
            <person name="Kirkpatrick S.J."/>
            <person name="Rahman N."/>
            <person name="Friedman J.M."/>
            <person name="Heng H.H.Q."/>
            <person name="Pelicci P.G."/>
            <person name="Lo-Coco F."/>
            <person name="Belloni E."/>
            <person name="Shaffer L.G."/>
            <person name="Pober B."/>
            <person name="Morton C.C."/>
            <person name="Gusella J.F."/>
            <person name="Bruns G.A.P."/>
            <person name="Korf B.R."/>
            <person name="Quade B.J."/>
            <person name="Ligon A.H."/>
            <person name="Ferguson H."/>
            <person name="Higgins A.W."/>
            <person name="Leach N.T."/>
            <person name="Herrick S.R."/>
            <person name="Lemyre E."/>
            <person name="Farra C.G."/>
            <person name="Kim H.-G."/>
            <person name="Summers A.M."/>
            <person name="Gripp K.W."/>
            <person name="Roberts W."/>
            <person name="Szatmari P."/>
            <person name="Winsor E.J.T."/>
            <person name="Grzeschik K.-H."/>
            <person name="Teebi A."/>
            <person name="Minassian B.A."/>
            <person name="Kere J."/>
            <person name="Armengol L."/>
            <person name="Pujana M.A."/>
            <person name="Estivill X."/>
            <person name="Wilson M.D."/>
            <person name="Koop B.F."/>
            <person name="Tosi S."/>
            <person name="Moore G.E."/>
            <person name="Boright A.P."/>
            <person name="Zlotorynski E."/>
            <person name="Kerem B."/>
            <person name="Kroisel P.M."/>
            <person name="Petek E."/>
            <person name="Oscier D.G."/>
            <person name="Mould S.J."/>
            <person name="Doehner H."/>
            <person name="Doehner K."/>
            <person name="Rommens J.M."/>
            <person name="Vincent J.B."/>
            <person name="Venter J.C."/>
            <person name="Li P.W."/>
            <person name="Mural R.J."/>
            <person name="Adams M.D."/>
            <person name="Tsui L.-C."/>
        </authorList>
    </citation>
    <scope>NUCLEOTIDE SEQUENCE [LARGE SCALE GENOMIC DNA]</scope>
</reference>
<reference key="5">
    <citation type="submission" date="2005-09" db="EMBL/GenBank/DDBJ databases">
        <authorList>
            <person name="Mural R.J."/>
            <person name="Istrail S."/>
            <person name="Sutton G.G."/>
            <person name="Florea L."/>
            <person name="Halpern A.L."/>
            <person name="Mobarry C.M."/>
            <person name="Lippert R."/>
            <person name="Walenz B."/>
            <person name="Shatkay H."/>
            <person name="Dew I."/>
            <person name="Miller J.R."/>
            <person name="Flanigan M.J."/>
            <person name="Edwards N.J."/>
            <person name="Bolanos R."/>
            <person name="Fasulo D."/>
            <person name="Halldorsson B.V."/>
            <person name="Hannenhalli S."/>
            <person name="Turner R."/>
            <person name="Yooseph S."/>
            <person name="Lu F."/>
            <person name="Nusskern D.R."/>
            <person name="Shue B.C."/>
            <person name="Zheng X.H."/>
            <person name="Zhong F."/>
            <person name="Delcher A.L."/>
            <person name="Huson D.H."/>
            <person name="Kravitz S.A."/>
            <person name="Mouchard L."/>
            <person name="Reinert K."/>
            <person name="Remington K.A."/>
            <person name="Clark A.G."/>
            <person name="Waterman M.S."/>
            <person name="Eichler E.E."/>
            <person name="Adams M.D."/>
            <person name="Hunkapiller M.W."/>
            <person name="Myers E.W."/>
            <person name="Venter J.C."/>
        </authorList>
    </citation>
    <scope>NUCLEOTIDE SEQUENCE [LARGE SCALE GENOMIC DNA]</scope>
</reference>
<reference key="6">
    <citation type="journal article" date="2003" name="Nature">
        <title>The DNA sequence of human chromosome 7.</title>
        <authorList>
            <person name="Hillier L.W."/>
            <person name="Fulton R.S."/>
            <person name="Fulton L.A."/>
            <person name="Graves T.A."/>
            <person name="Pepin K.H."/>
            <person name="Wagner-McPherson C."/>
            <person name="Layman D."/>
            <person name="Maas J."/>
            <person name="Jaeger S."/>
            <person name="Walker R."/>
            <person name="Wylie K."/>
            <person name="Sekhon M."/>
            <person name="Becker M.C."/>
            <person name="O'Laughlin M.D."/>
            <person name="Schaller M.E."/>
            <person name="Fewell G.A."/>
            <person name="Delehaunty K.D."/>
            <person name="Miner T.L."/>
            <person name="Nash W.E."/>
            <person name="Cordes M."/>
            <person name="Du H."/>
            <person name="Sun H."/>
            <person name="Edwards J."/>
            <person name="Bradshaw-Cordum H."/>
            <person name="Ali J."/>
            <person name="Andrews S."/>
            <person name="Isak A."/>
            <person name="Vanbrunt A."/>
            <person name="Nguyen C."/>
            <person name="Du F."/>
            <person name="Lamar B."/>
            <person name="Courtney L."/>
            <person name="Kalicki J."/>
            <person name="Ozersky P."/>
            <person name="Bielicki L."/>
            <person name="Scott K."/>
            <person name="Holmes A."/>
            <person name="Harkins R."/>
            <person name="Harris A."/>
            <person name="Strong C.M."/>
            <person name="Hou S."/>
            <person name="Tomlinson C."/>
            <person name="Dauphin-Kohlberg S."/>
            <person name="Kozlowicz-Reilly A."/>
            <person name="Leonard S."/>
            <person name="Rohlfing T."/>
            <person name="Rock S.M."/>
            <person name="Tin-Wollam A.-M."/>
            <person name="Abbott A."/>
            <person name="Minx P."/>
            <person name="Maupin R."/>
            <person name="Strowmatt C."/>
            <person name="Latreille P."/>
            <person name="Miller N."/>
            <person name="Johnson D."/>
            <person name="Murray J."/>
            <person name="Woessner J.P."/>
            <person name="Wendl M.C."/>
            <person name="Yang S.-P."/>
            <person name="Schultz B.R."/>
            <person name="Wallis J.W."/>
            <person name="Spieth J."/>
            <person name="Bieri T.A."/>
            <person name="Nelson J.O."/>
            <person name="Berkowicz N."/>
            <person name="Wohldmann P.E."/>
            <person name="Cook L.L."/>
            <person name="Hickenbotham M.T."/>
            <person name="Eldred J."/>
            <person name="Williams D."/>
            <person name="Bedell J.A."/>
            <person name="Mardis E.R."/>
            <person name="Clifton S.W."/>
            <person name="Chissoe S.L."/>
            <person name="Marra M.A."/>
            <person name="Raymond C."/>
            <person name="Haugen E."/>
            <person name="Gillett W."/>
            <person name="Zhou Y."/>
            <person name="James R."/>
            <person name="Phelps K."/>
            <person name="Iadanoto S."/>
            <person name="Bubb K."/>
            <person name="Simms E."/>
            <person name="Levy R."/>
            <person name="Clendenning J."/>
            <person name="Kaul R."/>
            <person name="Kent W.J."/>
            <person name="Furey T.S."/>
            <person name="Baertsch R.A."/>
            <person name="Brent M.R."/>
            <person name="Keibler E."/>
            <person name="Flicek P."/>
            <person name="Bork P."/>
            <person name="Suyama M."/>
            <person name="Bailey J.A."/>
            <person name="Portnoy M.E."/>
            <person name="Torrents D."/>
            <person name="Chinwalla A.T."/>
            <person name="Gish W.R."/>
            <person name="Eddy S.R."/>
            <person name="McPherson J.D."/>
            <person name="Olson M.V."/>
            <person name="Eichler E.E."/>
            <person name="Green E.D."/>
            <person name="Waterston R.H."/>
            <person name="Wilson R.K."/>
        </authorList>
    </citation>
    <scope>NUCLEOTIDE SEQUENCE [LARGE SCALE GENOMIC DNA]</scope>
</reference>
<reference key="7">
    <citation type="journal article" date="2004" name="Genome Res.">
        <title>The status, quality, and expansion of the NIH full-length cDNA project: the Mammalian Gene Collection (MGC).</title>
        <authorList>
            <consortium name="The MGC Project Team"/>
        </authorList>
    </citation>
    <scope>NUCLEOTIDE SEQUENCE [LARGE SCALE MRNA]</scope>
    <source>
        <tissue>Liver</tissue>
    </source>
</reference>
<reference key="8">
    <citation type="journal article" date="1996" name="Genomics">
        <title>The human serum paraoxonase/arylesterase gene (PON1) is one member of a multigene family.</title>
        <authorList>
            <person name="Primo-Parmo S.L."/>
            <person name="Sorenson R.C."/>
            <person name="Teiber J."/>
            <person name="La Du B.N."/>
        </authorList>
    </citation>
    <scope>NUCLEOTIDE SEQUENCE [MRNA] OF 14-354</scope>
    <source>
        <tissue>Liver</tissue>
    </source>
</reference>
<reference key="9">
    <citation type="journal article" date="2005" name="J. Lipid Res.">
        <title>Human paraoxonases (PON1, PON2, and PON3) are lactonases with overlapping and distinct substrate specificities.</title>
        <authorList>
            <person name="Draganov D.I."/>
            <person name="Teiber J.F."/>
            <person name="Speelman A."/>
            <person name="Osawa Y."/>
            <person name="Sunahara R."/>
            <person name="La Du B.N."/>
        </authorList>
    </citation>
    <scope>FUNCTION</scope>
    <scope>CATALYTIC ACTIVITY</scope>
    <scope>SUBUNIT</scope>
</reference>
<reference key="10">
    <citation type="journal article" date="2005" name="J. Proteome Res.">
        <title>Human plasma N-glycoproteome analysis by immunoaffinity subtraction, hydrazide chemistry, and mass spectrometry.</title>
        <authorList>
            <person name="Liu T."/>
            <person name="Qian W.-J."/>
            <person name="Gritsenko M.A."/>
            <person name="Camp D.G. II"/>
            <person name="Monroe M.E."/>
            <person name="Moore R.J."/>
            <person name="Smith R.D."/>
        </authorList>
    </citation>
    <scope>GLYCOSYLATION [LARGE SCALE ANALYSIS] AT ASN-323</scope>
    <source>
        <tissue>Plasma</tissue>
    </source>
</reference>
<reference key="11">
    <citation type="journal article" date="2009" name="Sci. Signal.">
        <title>Quantitative phosphoproteomic analysis of T cell receptor signaling reveals system-wide modulation of protein-protein interactions.</title>
        <authorList>
            <person name="Mayya V."/>
            <person name="Lundgren D.H."/>
            <person name="Hwang S.-I."/>
            <person name="Rezaul K."/>
            <person name="Wu L."/>
            <person name="Eng J.K."/>
            <person name="Rodionov V."/>
            <person name="Han D.K."/>
        </authorList>
    </citation>
    <scope>PHOSPHORYLATION [LARGE SCALE ANALYSIS] AT SER-165</scope>
    <scope>IDENTIFICATION BY MASS SPECTROMETRY [LARGE SCALE ANALYSIS]</scope>
    <source>
        <tissue>Leukemic T-cell</tissue>
    </source>
</reference>
<reference key="12">
    <citation type="journal article" date="2014" name="J. Proteomics">
        <title>An enzyme assisted RP-RPLC approach for in-depth analysis of human liver phosphoproteome.</title>
        <authorList>
            <person name="Bian Y."/>
            <person name="Song C."/>
            <person name="Cheng K."/>
            <person name="Dong M."/>
            <person name="Wang F."/>
            <person name="Huang J."/>
            <person name="Sun D."/>
            <person name="Wang L."/>
            <person name="Ye M."/>
            <person name="Zou H."/>
        </authorList>
    </citation>
    <scope>IDENTIFICATION BY MASS SPECTROMETRY [LARGE SCALE ANALYSIS]</scope>
    <source>
        <tissue>Liver</tissue>
    </source>
</reference>
<gene>
    <name type="primary">PON3</name>
</gene>